<evidence type="ECO:0000250" key="1">
    <source>
        <dbReference type="UniProtKB" id="Q62559"/>
    </source>
</evidence>
<evidence type="ECO:0000269" key="2">
    <source>
    </source>
</evidence>
<evidence type="ECO:0000269" key="3">
    <source>
    </source>
</evidence>
<evidence type="ECO:0000269" key="4">
    <source>
    </source>
</evidence>
<evidence type="ECO:0000269" key="5">
    <source>
    </source>
</evidence>
<evidence type="ECO:0000269" key="6">
    <source>
    </source>
</evidence>
<evidence type="ECO:0000305" key="7"/>
<name>IFT52_HUMAN</name>
<protein>
    <recommendedName>
        <fullName>Intraflagellar transport protein 52 homolog</fullName>
    </recommendedName>
    <alternativeName>
        <fullName>Protein NGD5 homolog</fullName>
    </alternativeName>
</protein>
<keyword id="KW-0966">Cell projection</keyword>
<keyword id="KW-1186">Ciliopathy</keyword>
<keyword id="KW-0969">Cilium</keyword>
<keyword id="KW-0970">Cilium biogenesis/degradation</keyword>
<keyword id="KW-0225">Disease variant</keyword>
<keyword id="KW-1267">Proteomics identification</keyword>
<keyword id="KW-1185">Reference proteome</keyword>
<dbReference type="EMBL" id="AF151811">
    <property type="protein sequence ID" value="AAD34048.1"/>
    <property type="molecule type" value="mRNA"/>
</dbReference>
<dbReference type="EMBL" id="AK001436">
    <property type="protein sequence ID" value="BAG50913.1"/>
    <property type="molecule type" value="mRNA"/>
</dbReference>
<dbReference type="EMBL" id="AL121886">
    <property type="status" value="NOT_ANNOTATED_CDS"/>
    <property type="molecule type" value="Genomic_DNA"/>
</dbReference>
<dbReference type="EMBL" id="Z98752">
    <property type="status" value="NOT_ANNOTATED_CDS"/>
    <property type="molecule type" value="Genomic_DNA"/>
</dbReference>
<dbReference type="EMBL" id="CH471077">
    <property type="protein sequence ID" value="EAW75953.1"/>
    <property type="molecule type" value="Genomic_DNA"/>
</dbReference>
<dbReference type="EMBL" id="CH471077">
    <property type="protein sequence ID" value="EAW75954.1"/>
    <property type="molecule type" value="Genomic_DNA"/>
</dbReference>
<dbReference type="EMBL" id="BC039831">
    <property type="protein sequence ID" value="AAH39831.1"/>
    <property type="molecule type" value="mRNA"/>
</dbReference>
<dbReference type="CCDS" id="CCDS33470.1"/>
<dbReference type="RefSeq" id="NP_001290387.1">
    <property type="nucleotide sequence ID" value="NM_001303458.3"/>
</dbReference>
<dbReference type="RefSeq" id="NP_057088.2">
    <property type="nucleotide sequence ID" value="NM_016004.5"/>
</dbReference>
<dbReference type="SMR" id="Q9Y366"/>
<dbReference type="BioGRID" id="119287">
    <property type="interactions" value="37"/>
</dbReference>
<dbReference type="ComplexPortal" id="CPX-5022">
    <property type="entry name" value="Intraflagellar transport complex B"/>
</dbReference>
<dbReference type="CORUM" id="Q9Y366"/>
<dbReference type="FunCoup" id="Q9Y366">
    <property type="interactions" value="730"/>
</dbReference>
<dbReference type="IntAct" id="Q9Y366">
    <property type="interactions" value="34"/>
</dbReference>
<dbReference type="STRING" id="9606.ENSP00000362121"/>
<dbReference type="iPTMnet" id="Q9Y366"/>
<dbReference type="PhosphoSitePlus" id="Q9Y366"/>
<dbReference type="BioMuta" id="IFT52"/>
<dbReference type="DMDM" id="116242524"/>
<dbReference type="jPOST" id="Q9Y366"/>
<dbReference type="MassIVE" id="Q9Y366"/>
<dbReference type="PaxDb" id="9606-ENSP00000362121"/>
<dbReference type="PeptideAtlas" id="Q9Y366"/>
<dbReference type="ProteomicsDB" id="85977"/>
<dbReference type="Pumba" id="Q9Y366"/>
<dbReference type="Antibodypedia" id="43646">
    <property type="antibodies" value="35 antibodies from 17 providers"/>
</dbReference>
<dbReference type="DNASU" id="51098"/>
<dbReference type="Ensembl" id="ENST00000373030.8">
    <property type="protein sequence ID" value="ENSP00000362121.3"/>
    <property type="gene ID" value="ENSG00000101052.13"/>
</dbReference>
<dbReference type="Ensembl" id="ENST00000373039.4">
    <property type="protein sequence ID" value="ENSP00000362130.4"/>
    <property type="gene ID" value="ENSG00000101052.13"/>
</dbReference>
<dbReference type="GeneID" id="51098"/>
<dbReference type="KEGG" id="hsa:51098"/>
<dbReference type="MANE-Select" id="ENST00000373030.8">
    <property type="protein sequence ID" value="ENSP00000362121.3"/>
    <property type="RefSeq nucleotide sequence ID" value="NM_016004.5"/>
    <property type="RefSeq protein sequence ID" value="NP_057088.2"/>
</dbReference>
<dbReference type="UCSC" id="uc002xkw.4">
    <property type="organism name" value="human"/>
</dbReference>
<dbReference type="AGR" id="HGNC:15901"/>
<dbReference type="CTD" id="51098"/>
<dbReference type="DisGeNET" id="51098"/>
<dbReference type="GeneCards" id="IFT52"/>
<dbReference type="GeneReviews" id="IFT52"/>
<dbReference type="HGNC" id="HGNC:15901">
    <property type="gene designation" value="IFT52"/>
</dbReference>
<dbReference type="HPA" id="ENSG00000101052">
    <property type="expression patterns" value="Low tissue specificity"/>
</dbReference>
<dbReference type="MalaCards" id="IFT52"/>
<dbReference type="MIM" id="617094">
    <property type="type" value="gene"/>
</dbReference>
<dbReference type="MIM" id="617102">
    <property type="type" value="phenotype"/>
</dbReference>
<dbReference type="neXtProt" id="NX_Q9Y366"/>
<dbReference type="OpenTargets" id="ENSG00000101052"/>
<dbReference type="Orphanet" id="1515">
    <property type="disease" value="Cranioectodermal dysplasia"/>
</dbReference>
<dbReference type="PharmGKB" id="PA25796"/>
<dbReference type="VEuPathDB" id="HostDB:ENSG00000101052"/>
<dbReference type="eggNOG" id="KOG3861">
    <property type="taxonomic scope" value="Eukaryota"/>
</dbReference>
<dbReference type="GeneTree" id="ENSGT00390000011581"/>
<dbReference type="HOGENOM" id="CLU_027692_0_0_1"/>
<dbReference type="InParanoid" id="Q9Y366"/>
<dbReference type="OMA" id="NWNVEQN"/>
<dbReference type="OrthoDB" id="10259368at2759"/>
<dbReference type="PAN-GO" id="Q9Y366">
    <property type="GO annotations" value="5 GO annotations based on evolutionary models"/>
</dbReference>
<dbReference type="PhylomeDB" id="Q9Y366"/>
<dbReference type="TreeFam" id="TF105916"/>
<dbReference type="PathwayCommons" id="Q9Y366"/>
<dbReference type="Reactome" id="R-HSA-5610787">
    <property type="pathway name" value="Hedgehog 'off' state"/>
</dbReference>
<dbReference type="Reactome" id="R-HSA-5620924">
    <property type="pathway name" value="Intraflagellar transport"/>
</dbReference>
<dbReference type="SignaLink" id="Q9Y366"/>
<dbReference type="BioGRID-ORCS" id="51098">
    <property type="hits" value="10 hits in 1158 CRISPR screens"/>
</dbReference>
<dbReference type="ChiTaRS" id="IFT52">
    <property type="organism name" value="human"/>
</dbReference>
<dbReference type="GenomeRNAi" id="51098"/>
<dbReference type="Pharos" id="Q9Y366">
    <property type="development level" value="Tbio"/>
</dbReference>
<dbReference type="PRO" id="PR:Q9Y366"/>
<dbReference type="Proteomes" id="UP000005640">
    <property type="component" value="Chromosome 20"/>
</dbReference>
<dbReference type="RNAct" id="Q9Y366">
    <property type="molecule type" value="protein"/>
</dbReference>
<dbReference type="Bgee" id="ENSG00000101052">
    <property type="expression patterns" value="Expressed in ganglionic eminence and 174 other cell types or tissues"/>
</dbReference>
<dbReference type="GO" id="GO:0005814">
    <property type="term" value="C:centriole"/>
    <property type="evidence" value="ECO:0000318"/>
    <property type="project" value="GO_Central"/>
</dbReference>
<dbReference type="GO" id="GO:0005813">
    <property type="term" value="C:centrosome"/>
    <property type="evidence" value="ECO:0007669"/>
    <property type="project" value="Ensembl"/>
</dbReference>
<dbReference type="GO" id="GO:0036064">
    <property type="term" value="C:ciliary basal body"/>
    <property type="evidence" value="ECO:0007669"/>
    <property type="project" value="Ensembl"/>
</dbReference>
<dbReference type="GO" id="GO:0097546">
    <property type="term" value="C:ciliary base"/>
    <property type="evidence" value="ECO:0000314"/>
    <property type="project" value="UniProtKB"/>
</dbReference>
<dbReference type="GO" id="GO:0097542">
    <property type="term" value="C:ciliary tip"/>
    <property type="evidence" value="ECO:0000304"/>
    <property type="project" value="Reactome"/>
</dbReference>
<dbReference type="GO" id="GO:0005929">
    <property type="term" value="C:cilium"/>
    <property type="evidence" value="ECO:0000318"/>
    <property type="project" value="GO_Central"/>
</dbReference>
<dbReference type="GO" id="GO:0044292">
    <property type="term" value="C:dendrite terminus"/>
    <property type="evidence" value="ECO:0007669"/>
    <property type="project" value="Ensembl"/>
</dbReference>
<dbReference type="GO" id="GO:0030992">
    <property type="term" value="C:intraciliary transport particle B"/>
    <property type="evidence" value="ECO:0000353"/>
    <property type="project" value="ComplexPortal"/>
</dbReference>
<dbReference type="GO" id="GO:0031514">
    <property type="term" value="C:motile cilium"/>
    <property type="evidence" value="ECO:0000250"/>
    <property type="project" value="BHF-UCL"/>
</dbReference>
<dbReference type="GO" id="GO:0032391">
    <property type="term" value="C:photoreceptor connecting cilium"/>
    <property type="evidence" value="ECO:0000314"/>
    <property type="project" value="UniProtKB"/>
</dbReference>
<dbReference type="GO" id="GO:0060271">
    <property type="term" value="P:cilium assembly"/>
    <property type="evidence" value="ECO:0000315"/>
    <property type="project" value="UniProtKB"/>
</dbReference>
<dbReference type="GO" id="GO:0009953">
    <property type="term" value="P:dorsal/ventral pattern formation"/>
    <property type="evidence" value="ECO:0007669"/>
    <property type="project" value="Ensembl"/>
</dbReference>
<dbReference type="GO" id="GO:0042733">
    <property type="term" value="P:embryonic digit morphogenesis"/>
    <property type="evidence" value="ECO:0007669"/>
    <property type="project" value="Ensembl"/>
</dbReference>
<dbReference type="GO" id="GO:0001947">
    <property type="term" value="P:heart looping"/>
    <property type="evidence" value="ECO:0007669"/>
    <property type="project" value="Ensembl"/>
</dbReference>
<dbReference type="GO" id="GO:0035720">
    <property type="term" value="P:intraciliary anterograde transport"/>
    <property type="evidence" value="ECO:0000315"/>
    <property type="project" value="UniProtKB"/>
</dbReference>
<dbReference type="GO" id="GO:0042073">
    <property type="term" value="P:intraciliary transport"/>
    <property type="evidence" value="ECO:0000318"/>
    <property type="project" value="GO_Central"/>
</dbReference>
<dbReference type="GO" id="GO:0043616">
    <property type="term" value="P:keratinocyte proliferation"/>
    <property type="evidence" value="ECO:0007669"/>
    <property type="project" value="Ensembl"/>
</dbReference>
<dbReference type="GO" id="GO:0010839">
    <property type="term" value="P:negative regulation of keratinocyte proliferation"/>
    <property type="evidence" value="ECO:0007669"/>
    <property type="project" value="Ensembl"/>
</dbReference>
<dbReference type="GO" id="GO:0001841">
    <property type="term" value="P:neural tube formation"/>
    <property type="evidence" value="ECO:0007669"/>
    <property type="project" value="Ensembl"/>
</dbReference>
<dbReference type="GO" id="GO:1905515">
    <property type="term" value="P:non-motile cilium assembly"/>
    <property type="evidence" value="ECO:0007669"/>
    <property type="project" value="Ensembl"/>
</dbReference>
<dbReference type="GO" id="GO:0070613">
    <property type="term" value="P:regulation of protein processing"/>
    <property type="evidence" value="ECO:0007669"/>
    <property type="project" value="Ensembl"/>
</dbReference>
<dbReference type="GO" id="GO:0007224">
    <property type="term" value="P:smoothened signaling pathway"/>
    <property type="evidence" value="ECO:0007669"/>
    <property type="project" value="Ensembl"/>
</dbReference>
<dbReference type="CDD" id="cd23683">
    <property type="entry name" value="IFT52_CTD"/>
    <property type="match status" value="1"/>
</dbReference>
<dbReference type="Gene3D" id="6.10.250.2800">
    <property type="match status" value="1"/>
</dbReference>
<dbReference type="InterPro" id="IPR039975">
    <property type="entry name" value="IFT52"/>
</dbReference>
<dbReference type="InterPro" id="IPR055460">
    <property type="entry name" value="IFT52_central"/>
</dbReference>
<dbReference type="InterPro" id="IPR055458">
    <property type="entry name" value="IFT52_GIFT"/>
</dbReference>
<dbReference type="InterPro" id="IPR048643">
    <property type="entry name" value="Itf52_C"/>
</dbReference>
<dbReference type="PANTHER" id="PTHR12969:SF7">
    <property type="entry name" value="INTRAFLAGELLAR TRANSPORT PROTEIN 52 HOMOLOG"/>
    <property type="match status" value="1"/>
</dbReference>
<dbReference type="PANTHER" id="PTHR12969">
    <property type="entry name" value="NGD5/OSM-6/IFT52"/>
    <property type="match status" value="1"/>
</dbReference>
<dbReference type="Pfam" id="PF23352">
    <property type="entry name" value="IFT52_central"/>
    <property type="match status" value="1"/>
</dbReference>
<dbReference type="Pfam" id="PF23355">
    <property type="entry name" value="IFT52_GIFT"/>
    <property type="match status" value="1"/>
</dbReference>
<dbReference type="Pfam" id="PF21178">
    <property type="entry name" value="Itf52_C"/>
    <property type="match status" value="1"/>
</dbReference>
<feature type="chain" id="PRO_0000084167" description="Intraflagellar transport protein 52 homolog">
    <location>
        <begin position="1"/>
        <end position="437"/>
    </location>
</feature>
<feature type="sequence variant" id="VAR_077805" description="In SRTD16; dbSNP:rs886037869." evidence="4">
    <original>A</original>
    <variation>T</variation>
    <location>
        <position position="199"/>
    </location>
</feature>
<feature type="sequence conflict" description="In Ref. 1; AAD34048." evidence="7" ref="1">
    <original>F</original>
    <variation>L</variation>
    <location>
        <position position="84"/>
    </location>
</feature>
<feature type="sequence conflict" description="In Ref. 1; AAD34048." evidence="7" ref="1">
    <original>PG</original>
    <variation>LA</variation>
    <location>
        <begin position="149"/>
        <end position="150"/>
    </location>
</feature>
<feature type="sequence conflict" description="In Ref. 1; AAD34048." evidence="7" ref="1">
    <original>V</original>
    <variation>VV</variation>
    <location>
        <position position="235"/>
    </location>
</feature>
<organism>
    <name type="scientific">Homo sapiens</name>
    <name type="common">Human</name>
    <dbReference type="NCBI Taxonomy" id="9606"/>
    <lineage>
        <taxon>Eukaryota</taxon>
        <taxon>Metazoa</taxon>
        <taxon>Chordata</taxon>
        <taxon>Craniata</taxon>
        <taxon>Vertebrata</taxon>
        <taxon>Euteleostomi</taxon>
        <taxon>Mammalia</taxon>
        <taxon>Eutheria</taxon>
        <taxon>Euarchontoglires</taxon>
        <taxon>Primates</taxon>
        <taxon>Haplorrhini</taxon>
        <taxon>Catarrhini</taxon>
        <taxon>Hominidae</taxon>
        <taxon>Homo</taxon>
    </lineage>
</organism>
<proteinExistence type="evidence at protein level"/>
<accession>Q9Y366</accession>
<accession>B3KMA1</accession>
<accession>E1P5W9</accession>
<accession>Q5H8Z0</accession>
<accession>Q9H1G3</accession>
<accession>Q9H1G4</accession>
<accession>Q9H1H2</accession>
<comment type="function">
    <text evidence="4">Involved in ciliogenesis as part of a complex involved in intraflagellar transport (IFT), the bi-directional movement of particles required for the assembly, maintenance and functioning of primary cilia (PubMed:27466190). Required for the anterograde transport of IFT88 (PubMed:27466190).</text>
</comment>
<comment type="subunit">
    <text evidence="1 2 5 6">Component of the IFT complex B, at least composed of IFT20, IFT22, IFT25, IFT27, IFT46, IFT52, TRAF3IP1/IFT54, IFT57, IFT74, IFT80, IFT81, and IFT88 (By similarity). Interacts with IFT88 (By similarity). Interacts with TTC25 (PubMed:25860617). Interacts with TTC21A (PubMed:30929735). Interacts with IFT70A1, IFT70A2, IFT70B and KIF17 (By similarity). Interacts with USH1G (PubMed:31637240).</text>
</comment>
<comment type="subcellular location">
    <subcellularLocation>
        <location evidence="1">Cell projection</location>
        <location evidence="1">Cilium</location>
    </subcellularLocation>
</comment>
<comment type="disease" evidence="3 4">
    <disease id="DI-04794">
        <name>Short-rib thoracic dysplasia 16 with or without polydactyly</name>
        <acronym>SRTD16</acronym>
        <description>A form of short-rib thoracic dysplasia, a group of autosomal recessive ciliopathies that are characterized by a constricted thoracic cage, short ribs, shortened tubular bones, and a 'trident' appearance of the acetabular roof. Polydactyly is variably present. Non-skeletal involvement can include cleft lip/palate as well as anomalies of major organs such as the brain, eye, heart, kidneys, liver, pancreas, intestines, and genitalia. Some forms of the disease are lethal in the neonatal period due to respiratory insufficiency secondary to a severely restricted thoracic cage, whereas others are compatible with life. Disease spectrum encompasses Ellis-van Creveld syndrome, asphyxiating thoracic dystrophy (Jeune syndrome), Mainzer-Saldino syndrome, and short rib-polydactyly syndrome.</description>
        <dbReference type="MIM" id="617102"/>
    </disease>
    <text>The disease is caused by variants affecting the gene represented in this entry.</text>
</comment>
<gene>
    <name type="primary">IFT52</name>
    <name type="synonym">C20orf9</name>
    <name type="synonym">NGD5</name>
    <name type="ORF">CGI-53</name>
</gene>
<sequence length="437" mass="49706">MEKELRSTILFNAYKKEIFTTNNGYKSMQKKLRSNWKIQSLKDEITSEKLNGVKLWITAGPREKFTAAEFEILKKYLDTGGDVFVMLGEGGESRFDTNINFLLEEYGIMVNNDAVVRNVYHKYFHPKEALVSSGVLNREISRAAGKAVPGIIDEESSGNNAQALTFVYPFGATLSVMKPAVAVLSTGSVCFPLNRPILAFYHSKNQGGKLAVLGSCHMFSDQYLDKEENSKIMDVVFQWLTTGDIHLNQIDAEDPEISDYMMLPYTATLSKRNRECLQESDEIPRDFTTLFDLSIFQLDTTSFHSVIEAHEQLNVKHEPLQLIQPQFETPLPTLQPAVFPPSFRELPPPPLELFDLDETFSSEKARLAQITNKCTEEDLEFYVRKCGDILGVTSKLPKDQQDAKHILEHVFFQVVEFKKLNQEHDIDTSETAFQNNF</sequence>
<reference key="1">
    <citation type="journal article" date="2000" name="Genome Res.">
        <title>Identification of novel human genes evolutionarily conserved in Caenorhabditis elegans by comparative proteomics.</title>
        <authorList>
            <person name="Lai C.-H."/>
            <person name="Chou C.-Y."/>
            <person name="Ch'ang L.-Y."/>
            <person name="Liu C.-S."/>
            <person name="Lin W.-C."/>
        </authorList>
    </citation>
    <scope>NUCLEOTIDE SEQUENCE [LARGE SCALE MRNA]</scope>
</reference>
<reference key="2">
    <citation type="journal article" date="2004" name="Nat. Genet.">
        <title>Complete sequencing and characterization of 21,243 full-length human cDNAs.</title>
        <authorList>
            <person name="Ota T."/>
            <person name="Suzuki Y."/>
            <person name="Nishikawa T."/>
            <person name="Otsuki T."/>
            <person name="Sugiyama T."/>
            <person name="Irie R."/>
            <person name="Wakamatsu A."/>
            <person name="Hayashi K."/>
            <person name="Sato H."/>
            <person name="Nagai K."/>
            <person name="Kimura K."/>
            <person name="Makita H."/>
            <person name="Sekine M."/>
            <person name="Obayashi M."/>
            <person name="Nishi T."/>
            <person name="Shibahara T."/>
            <person name="Tanaka T."/>
            <person name="Ishii S."/>
            <person name="Yamamoto J."/>
            <person name="Saito K."/>
            <person name="Kawai Y."/>
            <person name="Isono Y."/>
            <person name="Nakamura Y."/>
            <person name="Nagahari K."/>
            <person name="Murakami K."/>
            <person name="Yasuda T."/>
            <person name="Iwayanagi T."/>
            <person name="Wagatsuma M."/>
            <person name="Shiratori A."/>
            <person name="Sudo H."/>
            <person name="Hosoiri T."/>
            <person name="Kaku Y."/>
            <person name="Kodaira H."/>
            <person name="Kondo H."/>
            <person name="Sugawara M."/>
            <person name="Takahashi M."/>
            <person name="Kanda K."/>
            <person name="Yokoi T."/>
            <person name="Furuya T."/>
            <person name="Kikkawa E."/>
            <person name="Omura Y."/>
            <person name="Abe K."/>
            <person name="Kamihara K."/>
            <person name="Katsuta N."/>
            <person name="Sato K."/>
            <person name="Tanikawa M."/>
            <person name="Yamazaki M."/>
            <person name="Ninomiya K."/>
            <person name="Ishibashi T."/>
            <person name="Yamashita H."/>
            <person name="Murakawa K."/>
            <person name="Fujimori K."/>
            <person name="Tanai H."/>
            <person name="Kimata M."/>
            <person name="Watanabe M."/>
            <person name="Hiraoka S."/>
            <person name="Chiba Y."/>
            <person name="Ishida S."/>
            <person name="Ono Y."/>
            <person name="Takiguchi S."/>
            <person name="Watanabe S."/>
            <person name="Yosida M."/>
            <person name="Hotuta T."/>
            <person name="Kusano J."/>
            <person name="Kanehori K."/>
            <person name="Takahashi-Fujii A."/>
            <person name="Hara H."/>
            <person name="Tanase T.-O."/>
            <person name="Nomura Y."/>
            <person name="Togiya S."/>
            <person name="Komai F."/>
            <person name="Hara R."/>
            <person name="Takeuchi K."/>
            <person name="Arita M."/>
            <person name="Imose N."/>
            <person name="Musashino K."/>
            <person name="Yuuki H."/>
            <person name="Oshima A."/>
            <person name="Sasaki N."/>
            <person name="Aotsuka S."/>
            <person name="Yoshikawa Y."/>
            <person name="Matsunawa H."/>
            <person name="Ichihara T."/>
            <person name="Shiohata N."/>
            <person name="Sano S."/>
            <person name="Moriya S."/>
            <person name="Momiyama H."/>
            <person name="Satoh N."/>
            <person name="Takami S."/>
            <person name="Terashima Y."/>
            <person name="Suzuki O."/>
            <person name="Nakagawa S."/>
            <person name="Senoh A."/>
            <person name="Mizoguchi H."/>
            <person name="Goto Y."/>
            <person name="Shimizu F."/>
            <person name="Wakebe H."/>
            <person name="Hishigaki H."/>
            <person name="Watanabe T."/>
            <person name="Sugiyama A."/>
            <person name="Takemoto M."/>
            <person name="Kawakami B."/>
            <person name="Yamazaki M."/>
            <person name="Watanabe K."/>
            <person name="Kumagai A."/>
            <person name="Itakura S."/>
            <person name="Fukuzumi Y."/>
            <person name="Fujimori Y."/>
            <person name="Komiyama M."/>
            <person name="Tashiro H."/>
            <person name="Tanigami A."/>
            <person name="Fujiwara T."/>
            <person name="Ono T."/>
            <person name="Yamada K."/>
            <person name="Fujii Y."/>
            <person name="Ozaki K."/>
            <person name="Hirao M."/>
            <person name="Ohmori Y."/>
            <person name="Kawabata A."/>
            <person name="Hikiji T."/>
            <person name="Kobatake N."/>
            <person name="Inagaki H."/>
            <person name="Ikema Y."/>
            <person name="Okamoto S."/>
            <person name="Okitani R."/>
            <person name="Kawakami T."/>
            <person name="Noguchi S."/>
            <person name="Itoh T."/>
            <person name="Shigeta K."/>
            <person name="Senba T."/>
            <person name="Matsumura K."/>
            <person name="Nakajima Y."/>
            <person name="Mizuno T."/>
            <person name="Morinaga M."/>
            <person name="Sasaki M."/>
            <person name="Togashi T."/>
            <person name="Oyama M."/>
            <person name="Hata H."/>
            <person name="Watanabe M."/>
            <person name="Komatsu T."/>
            <person name="Mizushima-Sugano J."/>
            <person name="Satoh T."/>
            <person name="Shirai Y."/>
            <person name="Takahashi Y."/>
            <person name="Nakagawa K."/>
            <person name="Okumura K."/>
            <person name="Nagase T."/>
            <person name="Nomura N."/>
            <person name="Kikuchi H."/>
            <person name="Masuho Y."/>
            <person name="Yamashita R."/>
            <person name="Nakai K."/>
            <person name="Yada T."/>
            <person name="Nakamura Y."/>
            <person name="Ohara O."/>
            <person name="Isogai T."/>
            <person name="Sugano S."/>
        </authorList>
    </citation>
    <scope>NUCLEOTIDE SEQUENCE [LARGE SCALE MRNA]</scope>
</reference>
<reference key="3">
    <citation type="journal article" date="2001" name="Nature">
        <title>The DNA sequence and comparative analysis of human chromosome 20.</title>
        <authorList>
            <person name="Deloukas P."/>
            <person name="Matthews L.H."/>
            <person name="Ashurst J.L."/>
            <person name="Burton J."/>
            <person name="Gilbert J.G.R."/>
            <person name="Jones M."/>
            <person name="Stavrides G."/>
            <person name="Almeida J.P."/>
            <person name="Babbage A.K."/>
            <person name="Bagguley C.L."/>
            <person name="Bailey J."/>
            <person name="Barlow K.F."/>
            <person name="Bates K.N."/>
            <person name="Beard L.M."/>
            <person name="Beare D.M."/>
            <person name="Beasley O.P."/>
            <person name="Bird C.P."/>
            <person name="Blakey S.E."/>
            <person name="Bridgeman A.M."/>
            <person name="Brown A.J."/>
            <person name="Buck D."/>
            <person name="Burrill W.D."/>
            <person name="Butler A.P."/>
            <person name="Carder C."/>
            <person name="Carter N.P."/>
            <person name="Chapman J.C."/>
            <person name="Clamp M."/>
            <person name="Clark G."/>
            <person name="Clark L.N."/>
            <person name="Clark S.Y."/>
            <person name="Clee C.M."/>
            <person name="Clegg S."/>
            <person name="Cobley V.E."/>
            <person name="Collier R.E."/>
            <person name="Connor R.E."/>
            <person name="Corby N.R."/>
            <person name="Coulson A."/>
            <person name="Coville G.J."/>
            <person name="Deadman R."/>
            <person name="Dhami P.D."/>
            <person name="Dunn M."/>
            <person name="Ellington A.G."/>
            <person name="Frankland J.A."/>
            <person name="Fraser A."/>
            <person name="French L."/>
            <person name="Garner P."/>
            <person name="Grafham D.V."/>
            <person name="Griffiths C."/>
            <person name="Griffiths M.N.D."/>
            <person name="Gwilliam R."/>
            <person name="Hall R.E."/>
            <person name="Hammond S."/>
            <person name="Harley J.L."/>
            <person name="Heath P.D."/>
            <person name="Ho S."/>
            <person name="Holden J.L."/>
            <person name="Howden P.J."/>
            <person name="Huckle E."/>
            <person name="Hunt A.R."/>
            <person name="Hunt S.E."/>
            <person name="Jekosch K."/>
            <person name="Johnson C.M."/>
            <person name="Johnson D."/>
            <person name="Kay M.P."/>
            <person name="Kimberley A.M."/>
            <person name="King A."/>
            <person name="Knights A."/>
            <person name="Laird G.K."/>
            <person name="Lawlor S."/>
            <person name="Lehvaeslaiho M.H."/>
            <person name="Leversha M.A."/>
            <person name="Lloyd C."/>
            <person name="Lloyd D.M."/>
            <person name="Lovell J.D."/>
            <person name="Marsh V.L."/>
            <person name="Martin S.L."/>
            <person name="McConnachie L.J."/>
            <person name="McLay K."/>
            <person name="McMurray A.A."/>
            <person name="Milne S.A."/>
            <person name="Mistry D."/>
            <person name="Moore M.J.F."/>
            <person name="Mullikin J.C."/>
            <person name="Nickerson T."/>
            <person name="Oliver K."/>
            <person name="Parker A."/>
            <person name="Patel R."/>
            <person name="Pearce T.A.V."/>
            <person name="Peck A.I."/>
            <person name="Phillimore B.J.C.T."/>
            <person name="Prathalingam S.R."/>
            <person name="Plumb R.W."/>
            <person name="Ramsay H."/>
            <person name="Rice C.M."/>
            <person name="Ross M.T."/>
            <person name="Scott C.E."/>
            <person name="Sehra H.K."/>
            <person name="Shownkeen R."/>
            <person name="Sims S."/>
            <person name="Skuce C.D."/>
            <person name="Smith M.L."/>
            <person name="Soderlund C."/>
            <person name="Steward C.A."/>
            <person name="Sulston J.E."/>
            <person name="Swann R.M."/>
            <person name="Sycamore N."/>
            <person name="Taylor R."/>
            <person name="Tee L."/>
            <person name="Thomas D.W."/>
            <person name="Thorpe A."/>
            <person name="Tracey A."/>
            <person name="Tromans A.C."/>
            <person name="Vaudin M."/>
            <person name="Wall M."/>
            <person name="Wallis J.M."/>
            <person name="Whitehead S.L."/>
            <person name="Whittaker P."/>
            <person name="Willey D.L."/>
            <person name="Williams L."/>
            <person name="Williams S.A."/>
            <person name="Wilming L."/>
            <person name="Wray P.W."/>
            <person name="Hubbard T."/>
            <person name="Durbin R.M."/>
            <person name="Bentley D.R."/>
            <person name="Beck S."/>
            <person name="Rogers J."/>
        </authorList>
    </citation>
    <scope>NUCLEOTIDE SEQUENCE [LARGE SCALE GENOMIC DNA]</scope>
</reference>
<reference key="4">
    <citation type="submission" date="2005-09" db="EMBL/GenBank/DDBJ databases">
        <authorList>
            <person name="Mural R.J."/>
            <person name="Istrail S."/>
            <person name="Sutton G.G."/>
            <person name="Florea L."/>
            <person name="Halpern A.L."/>
            <person name="Mobarry C.M."/>
            <person name="Lippert R."/>
            <person name="Walenz B."/>
            <person name="Shatkay H."/>
            <person name="Dew I."/>
            <person name="Miller J.R."/>
            <person name="Flanigan M.J."/>
            <person name="Edwards N.J."/>
            <person name="Bolanos R."/>
            <person name="Fasulo D."/>
            <person name="Halldorsson B.V."/>
            <person name="Hannenhalli S."/>
            <person name="Turner R."/>
            <person name="Yooseph S."/>
            <person name="Lu F."/>
            <person name="Nusskern D.R."/>
            <person name="Shue B.C."/>
            <person name="Zheng X.H."/>
            <person name="Zhong F."/>
            <person name="Delcher A.L."/>
            <person name="Huson D.H."/>
            <person name="Kravitz S.A."/>
            <person name="Mouchard L."/>
            <person name="Reinert K."/>
            <person name="Remington K.A."/>
            <person name="Clark A.G."/>
            <person name="Waterman M.S."/>
            <person name="Eichler E.E."/>
            <person name="Adams M.D."/>
            <person name="Hunkapiller M.W."/>
            <person name="Myers E.W."/>
            <person name="Venter J.C."/>
        </authorList>
    </citation>
    <scope>NUCLEOTIDE SEQUENCE [LARGE SCALE GENOMIC DNA]</scope>
</reference>
<reference key="5">
    <citation type="journal article" date="2004" name="Genome Res.">
        <title>The status, quality, and expansion of the NIH full-length cDNA project: the Mammalian Gene Collection (MGC).</title>
        <authorList>
            <consortium name="The MGC Project Team"/>
        </authorList>
    </citation>
    <scope>NUCLEOTIDE SEQUENCE [LARGE SCALE MRNA]</scope>
</reference>
<reference key="6">
    <citation type="journal article" date="2015" name="PLoS ONE">
        <title>Characterization of tetratricopeptide repeat-containing proteins critical for cilia formation and function.</title>
        <authorList>
            <person name="Xu Y."/>
            <person name="Cao J."/>
            <person name="Huang S."/>
            <person name="Feng D."/>
            <person name="Zhang W."/>
            <person name="Zhu X."/>
            <person name="Yan X."/>
        </authorList>
    </citation>
    <scope>INTERACTION WITH TTC25</scope>
</reference>
<reference key="7">
    <citation type="journal article" date="2016" name="Clin. Genet.">
        <title>A homozygous nonsense variant in IFT52 is associated with a human skeletal ciliopathy.</title>
        <authorList>
            <person name="Girisha K.M."/>
            <person name="Shukla A."/>
            <person name="Trujillano D."/>
            <person name="Bhavani G.S."/>
            <person name="Hebbar M."/>
            <person name="Kadavigere R."/>
            <person name="Rolfs A."/>
        </authorList>
    </citation>
    <scope>INVOLVEMENT IN SRTD16</scope>
</reference>
<reference key="8">
    <citation type="journal article" date="2016" name="Hum. Mol. Genet.">
        <title>IFT52 mutations destabilize anterograde complex assembly, disrupt ciliogenesis and result in short rib polydactyly syndrome.</title>
        <authorList>
            <consortium name="University of Washington Center for Mendelian Genomics Consortium"/>
            <person name="Zhang W."/>
            <person name="Taylor S.P."/>
            <person name="Nevarez L."/>
            <person name="Lachman R.S."/>
            <person name="Nickerson D.A."/>
            <person name="Bamshad M."/>
            <person name="Krakow D."/>
            <person name="Cohn D.H."/>
        </authorList>
    </citation>
    <scope>FUNCTION</scope>
    <scope>INVOLVEMENT IN SRTD16</scope>
    <scope>VARIANT SRTD16 THR-199</scope>
</reference>
<reference key="9">
    <citation type="journal article" date="2019" name="Am. J. Hum. Genet.">
        <title>Bi-allelic mutations in TTC21A induce asthenoteratospermia in humans and mice.</title>
        <authorList>
            <person name="Liu W."/>
            <person name="He X."/>
            <person name="Yang S."/>
            <person name="Zouari R."/>
            <person name="Wang J."/>
            <person name="Wu H."/>
            <person name="Kherraf Z.E."/>
            <person name="Liu C."/>
            <person name="Coutton C."/>
            <person name="Zhao R."/>
            <person name="Tang D."/>
            <person name="Tang S."/>
            <person name="Lv M."/>
            <person name="Fang Y."/>
            <person name="Li W."/>
            <person name="Li H."/>
            <person name="Zhao J."/>
            <person name="Wang X."/>
            <person name="Zhao S."/>
            <person name="Zhang J."/>
            <person name="Arnoult C."/>
            <person name="Jin L."/>
            <person name="Zhang Z."/>
            <person name="Ray P.F."/>
            <person name="Cao Y."/>
            <person name="Zhang F."/>
        </authorList>
    </citation>
    <scope>INTERACTION WITH TTC21A</scope>
</reference>
<reference key="10">
    <citation type="journal article" date="2019" name="Front. Cell Dev. Biol.">
        <title>SANS (USH1G) Molecularly Links the Human Usher Syndrome Protein Network to the Intraflagellar Transport Module by Direct Binding to IFT-B Proteins.</title>
        <authorList>
            <person name="Sorusch N."/>
            <person name="Yildirim A."/>
            <person name="Knapp B."/>
            <person name="Janson J."/>
            <person name="Fleck W."/>
            <person name="Scharf C."/>
            <person name="Wolfrum U."/>
        </authorList>
    </citation>
    <scope>INTERACTION WITH USH1G</scope>
</reference>